<sequence>MRTSQYLLSTLKETPADAEVISHQLMLRAGMIRKLASGLYTWLPTGLRVLKKVENIVREEMNNAGAIEVSMPVVQPADLWQESGRWEQYGPELLRFVDRGERPFVLGPTHEEVITDLVRNELSSYKQLPLNFFQIQTKFRDEVRPRFGVMRSREFLMKDAYSFHTSQESLQETYDAMYAAYSRIFSRMGLDFRAVQADTGSIGGNASHEFQVLAQSGEDDIVFSDVSDYAANIELAEAIAPQTPRAAATQEMTLIDTPNAKTIAELVEQFNLPIEKTVKTLLVKAVKDSKSPLVALLVRGDHELNEVKAEKLPNVASPLTFATEEEIRAVINAGPGSLGPVNMPVPVIIDRSVAAMSDFAAGANIDGKHYFGINWDRDVATPIVADIRNVVAGDPSPDGQGTLLIKRGIEVGHIFQLGTKYSEALKASVQGEDGRNQILTMGCYGIGVTRVVAAAIEQNFDERGIVWPDAIAPFQVAILPMNMHKSFRVQELAEKLYSELRAQGIEVLMDDRKERPGVMFADMELIGIPHTIVIGDRNLDNDDIEYKYRRSGEKSLIKTGDIVDYLVKAIKG</sequence>
<dbReference type="EC" id="6.1.1.15" evidence="1"/>
<dbReference type="EMBL" id="CP000880">
    <property type="protein sequence ID" value="ABX22608.1"/>
    <property type="molecule type" value="Genomic_DNA"/>
</dbReference>
<dbReference type="SMR" id="A9MPG5"/>
<dbReference type="STRING" id="41514.SARI_02759"/>
<dbReference type="KEGG" id="ses:SARI_02759"/>
<dbReference type="HOGENOM" id="CLU_016739_0_0_6"/>
<dbReference type="Proteomes" id="UP000002084">
    <property type="component" value="Chromosome"/>
</dbReference>
<dbReference type="GO" id="GO:0005829">
    <property type="term" value="C:cytosol"/>
    <property type="evidence" value="ECO:0007669"/>
    <property type="project" value="TreeGrafter"/>
</dbReference>
<dbReference type="GO" id="GO:0002161">
    <property type="term" value="F:aminoacyl-tRNA deacylase activity"/>
    <property type="evidence" value="ECO:0007669"/>
    <property type="project" value="InterPro"/>
</dbReference>
<dbReference type="GO" id="GO:0005524">
    <property type="term" value="F:ATP binding"/>
    <property type="evidence" value="ECO:0007669"/>
    <property type="project" value="UniProtKB-UniRule"/>
</dbReference>
<dbReference type="GO" id="GO:0004827">
    <property type="term" value="F:proline-tRNA ligase activity"/>
    <property type="evidence" value="ECO:0007669"/>
    <property type="project" value="UniProtKB-UniRule"/>
</dbReference>
<dbReference type="GO" id="GO:0006433">
    <property type="term" value="P:prolyl-tRNA aminoacylation"/>
    <property type="evidence" value="ECO:0007669"/>
    <property type="project" value="UniProtKB-UniRule"/>
</dbReference>
<dbReference type="CDD" id="cd04334">
    <property type="entry name" value="ProRS-INS"/>
    <property type="match status" value="1"/>
</dbReference>
<dbReference type="CDD" id="cd00861">
    <property type="entry name" value="ProRS_anticodon_short"/>
    <property type="match status" value="1"/>
</dbReference>
<dbReference type="CDD" id="cd00779">
    <property type="entry name" value="ProRS_core_prok"/>
    <property type="match status" value="1"/>
</dbReference>
<dbReference type="FunFam" id="3.30.930.10:FF:000012">
    <property type="entry name" value="Proline--tRNA ligase"/>
    <property type="match status" value="1"/>
</dbReference>
<dbReference type="FunFam" id="3.30.930.10:FF:000097">
    <property type="entry name" value="Proline--tRNA ligase"/>
    <property type="match status" value="1"/>
</dbReference>
<dbReference type="FunFam" id="3.40.50.800:FF:000006">
    <property type="entry name" value="Proline--tRNA ligase"/>
    <property type="match status" value="1"/>
</dbReference>
<dbReference type="FunFam" id="3.90.960.10:FF:000001">
    <property type="entry name" value="Proline--tRNA ligase"/>
    <property type="match status" value="1"/>
</dbReference>
<dbReference type="Gene3D" id="3.40.50.800">
    <property type="entry name" value="Anticodon-binding domain"/>
    <property type="match status" value="1"/>
</dbReference>
<dbReference type="Gene3D" id="3.30.930.10">
    <property type="entry name" value="Bira Bifunctional Protein, Domain 2"/>
    <property type="match status" value="2"/>
</dbReference>
<dbReference type="Gene3D" id="3.90.960.10">
    <property type="entry name" value="YbaK/aminoacyl-tRNA synthetase-associated domain"/>
    <property type="match status" value="1"/>
</dbReference>
<dbReference type="HAMAP" id="MF_01569">
    <property type="entry name" value="Pro_tRNA_synth_type1"/>
    <property type="match status" value="1"/>
</dbReference>
<dbReference type="InterPro" id="IPR002314">
    <property type="entry name" value="aa-tRNA-synt_IIb"/>
</dbReference>
<dbReference type="InterPro" id="IPR006195">
    <property type="entry name" value="aa-tRNA-synth_II"/>
</dbReference>
<dbReference type="InterPro" id="IPR045864">
    <property type="entry name" value="aa-tRNA-synth_II/BPL/LPL"/>
</dbReference>
<dbReference type="InterPro" id="IPR004154">
    <property type="entry name" value="Anticodon-bd"/>
</dbReference>
<dbReference type="InterPro" id="IPR036621">
    <property type="entry name" value="Anticodon-bd_dom_sf"/>
</dbReference>
<dbReference type="InterPro" id="IPR002316">
    <property type="entry name" value="Pro-tRNA-ligase_IIa"/>
</dbReference>
<dbReference type="InterPro" id="IPR004500">
    <property type="entry name" value="Pro-tRNA-synth_IIa_bac-type"/>
</dbReference>
<dbReference type="InterPro" id="IPR023717">
    <property type="entry name" value="Pro-tRNA-Synthase_IIa_type1"/>
</dbReference>
<dbReference type="InterPro" id="IPR050062">
    <property type="entry name" value="Pro-tRNA_synthetase"/>
</dbReference>
<dbReference type="InterPro" id="IPR044140">
    <property type="entry name" value="ProRS_anticodon_short"/>
</dbReference>
<dbReference type="InterPro" id="IPR033730">
    <property type="entry name" value="ProRS_core_prok"/>
</dbReference>
<dbReference type="InterPro" id="IPR036754">
    <property type="entry name" value="YbaK/aa-tRNA-synt-asso_dom_sf"/>
</dbReference>
<dbReference type="InterPro" id="IPR007214">
    <property type="entry name" value="YbaK/aa-tRNA-synth-assoc-dom"/>
</dbReference>
<dbReference type="NCBIfam" id="NF006625">
    <property type="entry name" value="PRK09194.1"/>
    <property type="match status" value="1"/>
</dbReference>
<dbReference type="NCBIfam" id="TIGR00409">
    <property type="entry name" value="proS_fam_II"/>
    <property type="match status" value="1"/>
</dbReference>
<dbReference type="PANTHER" id="PTHR42753">
    <property type="entry name" value="MITOCHONDRIAL RIBOSOME PROTEIN L39/PROLYL-TRNA LIGASE FAMILY MEMBER"/>
    <property type="match status" value="1"/>
</dbReference>
<dbReference type="PANTHER" id="PTHR42753:SF2">
    <property type="entry name" value="PROLINE--TRNA LIGASE"/>
    <property type="match status" value="1"/>
</dbReference>
<dbReference type="Pfam" id="PF03129">
    <property type="entry name" value="HGTP_anticodon"/>
    <property type="match status" value="1"/>
</dbReference>
<dbReference type="Pfam" id="PF00587">
    <property type="entry name" value="tRNA-synt_2b"/>
    <property type="match status" value="1"/>
</dbReference>
<dbReference type="Pfam" id="PF04073">
    <property type="entry name" value="tRNA_edit"/>
    <property type="match status" value="1"/>
</dbReference>
<dbReference type="PIRSF" id="PIRSF001535">
    <property type="entry name" value="ProRS_1"/>
    <property type="match status" value="1"/>
</dbReference>
<dbReference type="PRINTS" id="PR01046">
    <property type="entry name" value="TRNASYNTHPRO"/>
</dbReference>
<dbReference type="SUPFAM" id="SSF52954">
    <property type="entry name" value="Class II aaRS ABD-related"/>
    <property type="match status" value="1"/>
</dbReference>
<dbReference type="SUPFAM" id="SSF55681">
    <property type="entry name" value="Class II aaRS and biotin synthetases"/>
    <property type="match status" value="1"/>
</dbReference>
<dbReference type="SUPFAM" id="SSF55826">
    <property type="entry name" value="YbaK/ProRS associated domain"/>
    <property type="match status" value="1"/>
</dbReference>
<dbReference type="PROSITE" id="PS50862">
    <property type="entry name" value="AA_TRNA_LIGASE_II"/>
    <property type="match status" value="1"/>
</dbReference>
<reference key="1">
    <citation type="submission" date="2007-11" db="EMBL/GenBank/DDBJ databases">
        <authorList>
            <consortium name="The Salmonella enterica serovar Arizonae Genome Sequencing Project"/>
            <person name="McClelland M."/>
            <person name="Sanderson E.K."/>
            <person name="Porwollik S."/>
            <person name="Spieth J."/>
            <person name="Clifton W.S."/>
            <person name="Fulton R."/>
            <person name="Chunyan W."/>
            <person name="Wollam A."/>
            <person name="Shah N."/>
            <person name="Pepin K."/>
            <person name="Bhonagiri V."/>
            <person name="Nash W."/>
            <person name="Johnson M."/>
            <person name="Thiruvilangam P."/>
            <person name="Wilson R."/>
        </authorList>
    </citation>
    <scope>NUCLEOTIDE SEQUENCE [LARGE SCALE GENOMIC DNA]</scope>
    <source>
        <strain>ATCC BAA-731 / CDC346-86 / RSK2980</strain>
    </source>
</reference>
<evidence type="ECO:0000255" key="1">
    <source>
        <dbReference type="HAMAP-Rule" id="MF_01569"/>
    </source>
</evidence>
<feature type="chain" id="PRO_1000087850" description="Proline--tRNA ligase">
    <location>
        <begin position="1"/>
        <end position="572"/>
    </location>
</feature>
<organism>
    <name type="scientific">Salmonella arizonae (strain ATCC BAA-731 / CDC346-86 / RSK2980)</name>
    <dbReference type="NCBI Taxonomy" id="41514"/>
    <lineage>
        <taxon>Bacteria</taxon>
        <taxon>Pseudomonadati</taxon>
        <taxon>Pseudomonadota</taxon>
        <taxon>Gammaproteobacteria</taxon>
        <taxon>Enterobacterales</taxon>
        <taxon>Enterobacteriaceae</taxon>
        <taxon>Salmonella</taxon>
    </lineage>
</organism>
<name>SYP_SALAR</name>
<proteinExistence type="inferred from homology"/>
<comment type="function">
    <text evidence="1">Catalyzes the attachment of proline to tRNA(Pro) in a two-step reaction: proline is first activated by ATP to form Pro-AMP and then transferred to the acceptor end of tRNA(Pro). As ProRS can inadvertently accommodate and process non-cognate amino acids such as alanine and cysteine, to avoid such errors it has two additional distinct editing activities against alanine. One activity is designated as 'pretransfer' editing and involves the tRNA(Pro)-independent hydrolysis of activated Ala-AMP. The other activity is designated 'posttransfer' editing and involves deacylation of mischarged Ala-tRNA(Pro). The misacylated Cys-tRNA(Pro) is not edited by ProRS.</text>
</comment>
<comment type="catalytic activity">
    <reaction evidence="1">
        <text>tRNA(Pro) + L-proline + ATP = L-prolyl-tRNA(Pro) + AMP + diphosphate</text>
        <dbReference type="Rhea" id="RHEA:14305"/>
        <dbReference type="Rhea" id="RHEA-COMP:9700"/>
        <dbReference type="Rhea" id="RHEA-COMP:9702"/>
        <dbReference type="ChEBI" id="CHEBI:30616"/>
        <dbReference type="ChEBI" id="CHEBI:33019"/>
        <dbReference type="ChEBI" id="CHEBI:60039"/>
        <dbReference type="ChEBI" id="CHEBI:78442"/>
        <dbReference type="ChEBI" id="CHEBI:78532"/>
        <dbReference type="ChEBI" id="CHEBI:456215"/>
        <dbReference type="EC" id="6.1.1.15"/>
    </reaction>
</comment>
<comment type="subunit">
    <text evidence="1">Homodimer.</text>
</comment>
<comment type="subcellular location">
    <subcellularLocation>
        <location evidence="1">Cytoplasm</location>
    </subcellularLocation>
</comment>
<comment type="domain">
    <text evidence="1">Consists of three domains: the N-terminal catalytic domain, the editing domain and the C-terminal anticodon-binding domain.</text>
</comment>
<comment type="similarity">
    <text evidence="1">Belongs to the class-II aminoacyl-tRNA synthetase family. ProS type 1 subfamily.</text>
</comment>
<accession>A9MPG5</accession>
<keyword id="KW-0030">Aminoacyl-tRNA synthetase</keyword>
<keyword id="KW-0067">ATP-binding</keyword>
<keyword id="KW-0963">Cytoplasm</keyword>
<keyword id="KW-0436">Ligase</keyword>
<keyword id="KW-0547">Nucleotide-binding</keyword>
<keyword id="KW-0648">Protein biosynthesis</keyword>
<keyword id="KW-1185">Reference proteome</keyword>
<gene>
    <name evidence="1" type="primary">proS</name>
    <name type="ordered locus">SARI_02759</name>
</gene>
<protein>
    <recommendedName>
        <fullName evidence="1">Proline--tRNA ligase</fullName>
        <ecNumber evidence="1">6.1.1.15</ecNumber>
    </recommendedName>
    <alternativeName>
        <fullName evidence="1">Prolyl-tRNA synthetase</fullName>
        <shortName evidence="1">ProRS</shortName>
    </alternativeName>
</protein>